<name>DBP10_YEAS7</name>
<comment type="function">
    <text evidence="1">ATP-binding RNA helicase involved in the biogenesis of 60S ribosomal subunits and is required for the normal formation of 25S and 5.8S rRNAs.</text>
</comment>
<comment type="catalytic activity">
    <reaction>
        <text>ATP + H2O = ADP + phosphate + H(+)</text>
        <dbReference type="Rhea" id="RHEA:13065"/>
        <dbReference type="ChEBI" id="CHEBI:15377"/>
        <dbReference type="ChEBI" id="CHEBI:15378"/>
        <dbReference type="ChEBI" id="CHEBI:30616"/>
        <dbReference type="ChEBI" id="CHEBI:43474"/>
        <dbReference type="ChEBI" id="CHEBI:456216"/>
        <dbReference type="EC" id="3.6.4.13"/>
    </reaction>
</comment>
<comment type="subunit">
    <text evidence="1">Interacts with RRP1 and associates with pre-ribosomal particles.</text>
</comment>
<comment type="subcellular location">
    <subcellularLocation>
        <location evidence="1">Nucleus</location>
        <location evidence="1">Nucleolus</location>
    </subcellularLocation>
</comment>
<comment type="domain">
    <text>The Q motif is unique to and characteristic of the DEAD box family of RNA helicases and controls ATP binding and hydrolysis.</text>
</comment>
<comment type="similarity">
    <text evidence="6">Belongs to the DEAD box helicase family. DDX54/DBP10 subfamily.</text>
</comment>
<keyword id="KW-0067">ATP-binding</keyword>
<keyword id="KW-0347">Helicase</keyword>
<keyword id="KW-0378">Hydrolase</keyword>
<keyword id="KW-0547">Nucleotide-binding</keyword>
<keyword id="KW-0539">Nucleus</keyword>
<keyword id="KW-0597">Phosphoprotein</keyword>
<keyword id="KW-0690">Ribosome biogenesis</keyword>
<keyword id="KW-0694">RNA-binding</keyword>
<keyword id="KW-0698">rRNA processing</keyword>
<dbReference type="EC" id="3.6.4.13"/>
<dbReference type="EMBL" id="AAFW02000145">
    <property type="protein sequence ID" value="EDN60320.1"/>
    <property type="molecule type" value="Genomic_DNA"/>
</dbReference>
<dbReference type="SMR" id="A6ZXU0"/>
<dbReference type="HOGENOM" id="CLU_003041_5_2_1"/>
<dbReference type="Proteomes" id="UP000007060">
    <property type="component" value="Unassembled WGS sequence"/>
</dbReference>
<dbReference type="GO" id="GO:0005829">
    <property type="term" value="C:cytosol"/>
    <property type="evidence" value="ECO:0007669"/>
    <property type="project" value="TreeGrafter"/>
</dbReference>
<dbReference type="GO" id="GO:0005730">
    <property type="term" value="C:nucleolus"/>
    <property type="evidence" value="ECO:0007669"/>
    <property type="project" value="UniProtKB-SubCell"/>
</dbReference>
<dbReference type="GO" id="GO:0005524">
    <property type="term" value="F:ATP binding"/>
    <property type="evidence" value="ECO:0007669"/>
    <property type="project" value="UniProtKB-KW"/>
</dbReference>
<dbReference type="GO" id="GO:0016887">
    <property type="term" value="F:ATP hydrolysis activity"/>
    <property type="evidence" value="ECO:0007669"/>
    <property type="project" value="RHEA"/>
</dbReference>
<dbReference type="GO" id="GO:0003723">
    <property type="term" value="F:RNA binding"/>
    <property type="evidence" value="ECO:0007669"/>
    <property type="project" value="UniProtKB-KW"/>
</dbReference>
<dbReference type="GO" id="GO:0003724">
    <property type="term" value="F:RNA helicase activity"/>
    <property type="evidence" value="ECO:0007669"/>
    <property type="project" value="UniProtKB-EC"/>
</dbReference>
<dbReference type="GO" id="GO:0006364">
    <property type="term" value="P:rRNA processing"/>
    <property type="evidence" value="ECO:0007669"/>
    <property type="project" value="UniProtKB-KW"/>
</dbReference>
<dbReference type="CDD" id="cd17959">
    <property type="entry name" value="DEADc_DDX54"/>
    <property type="match status" value="1"/>
</dbReference>
<dbReference type="CDD" id="cd18787">
    <property type="entry name" value="SF2_C_DEAD"/>
    <property type="match status" value="1"/>
</dbReference>
<dbReference type="FunFam" id="3.40.50.300:FF:000784">
    <property type="entry name" value="ATP-dependent RNA helicase DDX54"/>
    <property type="match status" value="1"/>
</dbReference>
<dbReference type="FunFam" id="3.40.50.300:FF:000865">
    <property type="entry name" value="ATP-dependent RNA helicase DDX54"/>
    <property type="match status" value="1"/>
</dbReference>
<dbReference type="Gene3D" id="3.40.50.300">
    <property type="entry name" value="P-loop containing nucleotide triphosphate hydrolases"/>
    <property type="match status" value="2"/>
</dbReference>
<dbReference type="InterPro" id="IPR012541">
    <property type="entry name" value="DBP10_C"/>
</dbReference>
<dbReference type="InterPro" id="IPR033517">
    <property type="entry name" value="DDX54/DBP10_DEAD-box_helicase"/>
</dbReference>
<dbReference type="InterPro" id="IPR011545">
    <property type="entry name" value="DEAD/DEAH_box_helicase_dom"/>
</dbReference>
<dbReference type="InterPro" id="IPR050079">
    <property type="entry name" value="DEAD_box_RNA_helicase"/>
</dbReference>
<dbReference type="InterPro" id="IPR014001">
    <property type="entry name" value="Helicase_ATP-bd"/>
</dbReference>
<dbReference type="InterPro" id="IPR001650">
    <property type="entry name" value="Helicase_C-like"/>
</dbReference>
<dbReference type="InterPro" id="IPR027417">
    <property type="entry name" value="P-loop_NTPase"/>
</dbReference>
<dbReference type="InterPro" id="IPR000629">
    <property type="entry name" value="RNA-helicase_DEAD-box_CS"/>
</dbReference>
<dbReference type="InterPro" id="IPR014014">
    <property type="entry name" value="RNA_helicase_DEAD_Q_motif"/>
</dbReference>
<dbReference type="PANTHER" id="PTHR47959">
    <property type="entry name" value="ATP-DEPENDENT RNA HELICASE RHLE-RELATED"/>
    <property type="match status" value="1"/>
</dbReference>
<dbReference type="PANTHER" id="PTHR47959:SF8">
    <property type="entry name" value="RNA HELICASE"/>
    <property type="match status" value="1"/>
</dbReference>
<dbReference type="Pfam" id="PF08147">
    <property type="entry name" value="DBP10CT"/>
    <property type="match status" value="1"/>
</dbReference>
<dbReference type="Pfam" id="PF00270">
    <property type="entry name" value="DEAD"/>
    <property type="match status" value="1"/>
</dbReference>
<dbReference type="Pfam" id="PF00271">
    <property type="entry name" value="Helicase_C"/>
    <property type="match status" value="1"/>
</dbReference>
<dbReference type="SMART" id="SM01123">
    <property type="entry name" value="DBP10CT"/>
    <property type="match status" value="1"/>
</dbReference>
<dbReference type="SMART" id="SM00487">
    <property type="entry name" value="DEXDc"/>
    <property type="match status" value="1"/>
</dbReference>
<dbReference type="SMART" id="SM00490">
    <property type="entry name" value="HELICc"/>
    <property type="match status" value="1"/>
</dbReference>
<dbReference type="SUPFAM" id="SSF52540">
    <property type="entry name" value="P-loop containing nucleoside triphosphate hydrolases"/>
    <property type="match status" value="2"/>
</dbReference>
<dbReference type="PROSITE" id="PS00039">
    <property type="entry name" value="DEAD_ATP_HELICASE"/>
    <property type="match status" value="1"/>
</dbReference>
<dbReference type="PROSITE" id="PS51192">
    <property type="entry name" value="HELICASE_ATP_BIND_1"/>
    <property type="match status" value="1"/>
</dbReference>
<dbReference type="PROSITE" id="PS51194">
    <property type="entry name" value="HELICASE_CTER"/>
    <property type="match status" value="1"/>
</dbReference>
<dbReference type="PROSITE" id="PS51195">
    <property type="entry name" value="Q_MOTIF"/>
    <property type="match status" value="1"/>
</dbReference>
<proteinExistence type="inferred from homology"/>
<protein>
    <recommendedName>
        <fullName>ATP-dependent RNA helicase DBP10</fullName>
        <ecNumber>3.6.4.13</ecNumber>
    </recommendedName>
    <alternativeName>
        <fullName>DEAD box protein 10</fullName>
    </alternativeName>
</protein>
<reference key="1">
    <citation type="journal article" date="2007" name="Proc. Natl. Acad. Sci. U.S.A.">
        <title>Genome sequencing and comparative analysis of Saccharomyces cerevisiae strain YJM789.</title>
        <authorList>
            <person name="Wei W."/>
            <person name="McCusker J.H."/>
            <person name="Hyman R.W."/>
            <person name="Jones T."/>
            <person name="Ning Y."/>
            <person name="Cao Z."/>
            <person name="Gu Z."/>
            <person name="Bruno D."/>
            <person name="Miranda M."/>
            <person name="Nguyen M."/>
            <person name="Wilhelmy J."/>
            <person name="Komp C."/>
            <person name="Tamse R."/>
            <person name="Wang X."/>
            <person name="Jia P."/>
            <person name="Luedi P."/>
            <person name="Oefner P.J."/>
            <person name="David L."/>
            <person name="Dietrich F.S."/>
            <person name="Li Y."/>
            <person name="Davis R.W."/>
            <person name="Steinmetz L.M."/>
        </authorList>
    </citation>
    <scope>NUCLEOTIDE SEQUENCE [LARGE SCALE GENOMIC DNA]</scope>
    <source>
        <strain>YJM789</strain>
    </source>
</reference>
<accession>A6ZXU0</accession>
<organism>
    <name type="scientific">Saccharomyces cerevisiae (strain YJM789)</name>
    <name type="common">Baker's yeast</name>
    <dbReference type="NCBI Taxonomy" id="307796"/>
    <lineage>
        <taxon>Eukaryota</taxon>
        <taxon>Fungi</taxon>
        <taxon>Dikarya</taxon>
        <taxon>Ascomycota</taxon>
        <taxon>Saccharomycotina</taxon>
        <taxon>Saccharomycetes</taxon>
        <taxon>Saccharomycetales</taxon>
        <taxon>Saccharomycetaceae</taxon>
        <taxon>Saccharomyces</taxon>
    </lineage>
</organism>
<sequence>MAGVQKRKRDLEDQDDNGSEEDDIAFDIANEIALNDSESDANDSDSEVEADYGPNDVQDVIEYSSDEEEGVNNKKKAENKDIKKKKNSKKEIAAFPMLEMSDDENNASGKTQTGDDEDDVNEYFSTNNLEKTKHKKGSFPSFGLSKIVLNNIKRKGFRQPTPIQRKTIPLILQSRDIVGMARTGSGKTAAFILPMVEKLKSHSGKIGARAVILSPSRELAMQTFNVFKDFARGTELRSVLLTGGDSLEEQFGMMMTNPDVIIATPGRFLHLKVEMNLDLKSVEYVVFDEADRLFEMGFQEQLNELLASLPTTRQTLLFSATLPNSLVDFVKAGLVNPVLVRLDAETKVSENLEMLFLSSKNADREANLLYILQEIIKIPLATSEQLQKLQNSNNEADSDSDDENDRQKKRRNFKKEKFRKQKMPAANELPSEKATILFVPTRHHVEYISQLLRDCGYLISYIYGTLDQHARKRQLYNFRAGLTSILVVTDVAARGVDIPMLANVINYTLPGSSKIFVHRVGRTARAGNKGWAYSIVAENELPYLLDLELFLGEKILLTPMYDSLVDVMKKRWIDEGKPEYQFQPPKLSYTKRLVLGSCPRLDVEGLGDLYKNLMSSNFDLQLAKKTAMKAEKLYYRTRTSASPESLKRSKEIISSGWDAQNAFFGKNEEKEKLDFLAKLQNRRNKETVFEFTRNPDDEMAVFMKRRRKQLAPIQRKATERRELLEKERMAGLSHSIEDEILKGDDGETGYTVSEDALKEFEDADQLLEAQENENKKKKKPKSFKDPTFFLSHYAPAGEIQDKQLQITNGFANDAAQAAYDLNSDDKVQVHKQTATVKWDKKRKKYVNTQGIDNKKYIIGESGQKIAASFRSGRFDDWSKARNLKPLKVGSRETSIPSNLLEDPSQGPAANGRTVRGKFKHKQMKAPKMPDKHRDNYYSQKKKVEKALQSGISVKGYNNAPGLRSELKSTEQIRKDRIIAEKKRAKNARPSKKRKF</sequence>
<gene>
    <name type="primary">DBP10</name>
    <name type="ORF">SCY_0878</name>
</gene>
<feature type="chain" id="PRO_0000310247" description="ATP-dependent RNA helicase DBP10">
    <location>
        <begin position="1"/>
        <end position="995"/>
    </location>
</feature>
<feature type="domain" description="Helicase ATP-binding" evidence="3">
    <location>
        <begin position="168"/>
        <end position="340"/>
    </location>
</feature>
<feature type="domain" description="Helicase C-terminal" evidence="4">
    <location>
        <begin position="418"/>
        <end position="568"/>
    </location>
</feature>
<feature type="region of interest" description="Disordered" evidence="5">
    <location>
        <begin position="1"/>
        <end position="120"/>
    </location>
</feature>
<feature type="region of interest" description="Disordered" evidence="5">
    <location>
        <begin position="389"/>
        <end position="427"/>
    </location>
</feature>
<feature type="region of interest" description="Disordered" evidence="5">
    <location>
        <begin position="889"/>
        <end position="973"/>
    </location>
</feature>
<feature type="short sequence motif" description="Q motif">
    <location>
        <begin position="137"/>
        <end position="165"/>
    </location>
</feature>
<feature type="short sequence motif" description="DEAD box">
    <location>
        <begin position="288"/>
        <end position="291"/>
    </location>
</feature>
<feature type="compositionally biased region" description="Acidic residues" evidence="5">
    <location>
        <begin position="12"/>
        <end position="25"/>
    </location>
</feature>
<feature type="compositionally biased region" description="Acidic residues" evidence="5">
    <location>
        <begin position="37"/>
        <end position="50"/>
    </location>
</feature>
<feature type="compositionally biased region" description="Basic and acidic residues" evidence="5">
    <location>
        <begin position="71"/>
        <end position="81"/>
    </location>
</feature>
<feature type="compositionally biased region" description="Basic residues" evidence="5">
    <location>
        <begin position="407"/>
        <end position="422"/>
    </location>
</feature>
<feature type="compositionally biased region" description="Basic residues" evidence="5">
    <location>
        <begin position="914"/>
        <end position="924"/>
    </location>
</feature>
<feature type="compositionally biased region" description="Basic and acidic residues" evidence="5">
    <location>
        <begin position="964"/>
        <end position="973"/>
    </location>
</feature>
<feature type="binding site" evidence="3">
    <location>
        <begin position="181"/>
        <end position="188"/>
    </location>
    <ligand>
        <name>ATP</name>
        <dbReference type="ChEBI" id="CHEBI:30616"/>
    </ligand>
</feature>
<feature type="modified residue" description="Phosphoserine" evidence="2">
    <location>
        <position position="101"/>
    </location>
</feature>
<feature type="modified residue" description="Phosphoserine" evidence="2">
    <location>
        <position position="398"/>
    </location>
</feature>
<feature type="modified residue" description="Phosphoserine" evidence="2">
    <location>
        <position position="400"/>
    </location>
</feature>
<evidence type="ECO:0000250" key="1"/>
<evidence type="ECO:0000250" key="2">
    <source>
        <dbReference type="UniProtKB" id="Q12389"/>
    </source>
</evidence>
<evidence type="ECO:0000255" key="3">
    <source>
        <dbReference type="PROSITE-ProRule" id="PRU00541"/>
    </source>
</evidence>
<evidence type="ECO:0000255" key="4">
    <source>
        <dbReference type="PROSITE-ProRule" id="PRU00542"/>
    </source>
</evidence>
<evidence type="ECO:0000256" key="5">
    <source>
        <dbReference type="SAM" id="MobiDB-lite"/>
    </source>
</evidence>
<evidence type="ECO:0000305" key="6"/>